<keyword id="KW-0002">3D-structure</keyword>
<keyword id="KW-0004">4Fe-4S</keyword>
<keyword id="KW-0903">Direct protein sequencing</keyword>
<keyword id="KW-0249">Electron transport</keyword>
<keyword id="KW-0408">Iron</keyword>
<keyword id="KW-0411">Iron-sulfur</keyword>
<keyword id="KW-0472">Membrane</keyword>
<keyword id="KW-0479">Metal-binding</keyword>
<keyword id="KW-0560">Oxidoreductase</keyword>
<keyword id="KW-0602">Photosynthesis</keyword>
<keyword id="KW-0603">Photosystem I</keyword>
<keyword id="KW-1185">Reference proteome</keyword>
<keyword id="KW-0677">Repeat</keyword>
<keyword id="KW-0793">Thylakoid</keyword>
<keyword id="KW-0813">Transport</keyword>
<reference key="1">
    <citation type="book" date="1990" name="Current research in photosynthesis">
        <editorList>
            <person name="Baltscheffsky M."/>
        </editorList>
        <authorList>
            <person name="Bryant D.A."/>
            <person name="Rhiel E."/>
            <person name="de Lorimier R."/>
            <person name="Zhou J."/>
            <person name="Stirewalt V.L."/>
            <person name="Gasparich G.E."/>
            <person name="Dubbs J.M."/>
            <person name="Snyder W."/>
        </authorList>
    </citation>
    <scope>NUCLEOTIDE SEQUENCE [GENOMIC DNA]</scope>
</reference>
<reference key="2">
    <citation type="journal article" date="1992" name="Gene">
        <title>The psaC genes of Synechococcus sp. PCC7002 and Cyanophora paradoxa: cloning and sequence analysis.</title>
        <authorList>
            <person name="Rhiel E."/>
            <person name="Stirewalt V.L."/>
            <person name="Gasparich G.E."/>
            <person name="Bryant D.A."/>
        </authorList>
    </citation>
    <scope>NUCLEOTIDE SEQUENCE [GENOMIC DNA]</scope>
    <scope>PROTEIN SEQUENCE OF 2-10</scope>
</reference>
<reference key="3">
    <citation type="submission" date="2008-02" db="EMBL/GenBank/DDBJ databases">
        <title>Complete sequence of Synechococcus sp. PCC 7002.</title>
        <authorList>
            <person name="Li T."/>
            <person name="Zhao J."/>
            <person name="Zhao C."/>
            <person name="Liu Z."/>
            <person name="Zhao F."/>
            <person name="Marquardt J."/>
            <person name="Nomura C.T."/>
            <person name="Persson S."/>
            <person name="Detter J.C."/>
            <person name="Richardson P.M."/>
            <person name="Lanz C."/>
            <person name="Schuster S.C."/>
            <person name="Wang J."/>
            <person name="Li S."/>
            <person name="Huang X."/>
            <person name="Cai T."/>
            <person name="Yu Z."/>
            <person name="Luo J."/>
            <person name="Zhao J."/>
            <person name="Bryant D.A."/>
        </authorList>
    </citation>
    <scope>NUCLEOTIDE SEQUENCE [LARGE SCALE GENOMIC DNA]</scope>
    <source>
        <strain>ATCC 27264 / PCC 7002 / PR-6</strain>
    </source>
</reference>
<reference key="4">
    <citation type="journal article" date="1992" name="Biochemistry">
        <title>Site-directed conversion of a cysteine to aspartate leads to the assembly of a [3Fe-4S] cluster in PsaC of photosystem I. The photoreduction of FA is independent of FB.</title>
        <authorList>
            <person name="Zhao J."/>
            <person name="Li N."/>
            <person name="Warren P.V."/>
            <person name="Golbeck J.H."/>
            <person name="Bryant D.A."/>
        </authorList>
    </citation>
    <scope>MUTAGENESIS OF CYS-14 AND CYS-51</scope>
</reference>
<reference key="5">
    <citation type="journal article" date="1995" name="J. Biol. Chem.">
        <title>Modified ligands to FA and FB in photosystem I. I. Structural constraints for the formation of iron-sulfur clusters in free and rebound PsaC.</title>
        <authorList>
            <person name="Mehari T."/>
            <person name="Qiao F."/>
            <person name="Scott M.P."/>
            <person name="Nellis D.F."/>
            <person name="Zhao J."/>
            <person name="Bryant D.A."/>
            <person name="Golbeck J.H."/>
        </authorList>
    </citation>
    <scope>MUTAGENESIS OF CYS-14; CYS-21; CYS-34; CYS-51 AND CYS-58</scope>
</reference>
<reference key="6">
    <citation type="journal article" date="1995" name="J. Biol. Chem.">
        <title>Modified ligands to FA and FB in photosystem I. II. Characterization of a mixed ligand [4Fe-4S] cluster in the C51D mutant of PsaC upon rebinding to P700-FX cores.</title>
        <authorList>
            <person name="Yu L."/>
            <person name="Vassiliev I.R."/>
            <person name="Jung Y.-S."/>
            <person name="Bryant D.A."/>
            <person name="Golbeck J.H."/>
        </authorList>
    </citation>
    <scope>MUTAGENESIS OF CYS-51</scope>
</reference>
<feature type="initiator methionine" description="Removed" evidence="3">
    <location>
        <position position="1"/>
    </location>
</feature>
<feature type="chain" id="PRO_0000062021" description="Photosystem I iron-sulfur center">
    <location>
        <begin position="2"/>
        <end position="81"/>
    </location>
</feature>
<feature type="domain" description="4Fe-4S ferredoxin-type 1">
    <location>
        <begin position="2"/>
        <end position="31"/>
    </location>
</feature>
<feature type="domain" description="4Fe-4S ferredoxin-type 2">
    <location>
        <begin position="37"/>
        <end position="68"/>
    </location>
</feature>
<feature type="binding site">
    <location>
        <position position="11"/>
    </location>
    <ligand>
        <name>[4Fe-4S] cluster</name>
        <dbReference type="ChEBI" id="CHEBI:49883"/>
        <label>1</label>
    </ligand>
</feature>
<feature type="binding site">
    <location>
        <position position="14"/>
    </location>
    <ligand>
        <name>[4Fe-4S] cluster</name>
        <dbReference type="ChEBI" id="CHEBI:49883"/>
        <label>1</label>
    </ligand>
</feature>
<feature type="binding site">
    <location>
        <position position="17"/>
    </location>
    <ligand>
        <name>[4Fe-4S] cluster</name>
        <dbReference type="ChEBI" id="CHEBI:49883"/>
        <label>1</label>
    </ligand>
</feature>
<feature type="binding site">
    <location>
        <position position="21"/>
    </location>
    <ligand>
        <name>[4Fe-4S] cluster</name>
        <dbReference type="ChEBI" id="CHEBI:49883"/>
        <label>2</label>
    </ligand>
</feature>
<feature type="binding site">
    <location>
        <position position="48"/>
    </location>
    <ligand>
        <name>[4Fe-4S] cluster</name>
        <dbReference type="ChEBI" id="CHEBI:49883"/>
        <label>2</label>
    </ligand>
</feature>
<feature type="binding site">
    <location>
        <position position="51"/>
    </location>
    <ligand>
        <name>[4Fe-4S] cluster</name>
        <dbReference type="ChEBI" id="CHEBI:49883"/>
        <label>2</label>
    </ligand>
</feature>
<feature type="binding site">
    <location>
        <position position="54"/>
    </location>
    <ligand>
        <name>[4Fe-4S] cluster</name>
        <dbReference type="ChEBI" id="CHEBI:49883"/>
        <label>2</label>
    </ligand>
</feature>
<feature type="binding site">
    <location>
        <position position="58"/>
    </location>
    <ligand>
        <name>[4Fe-4S] cluster</name>
        <dbReference type="ChEBI" id="CHEBI:49883"/>
        <label>1</label>
    </ligand>
</feature>
<feature type="mutagenesis site" description="Generates altered FB cluster (in vitro)." evidence="2 4">
    <original>C</original>
    <variation>A</variation>
    <variation>D</variation>
    <variation>S</variation>
    <location>
        <position position="14"/>
    </location>
</feature>
<feature type="mutagenesis site" description="Unable to bind PSI cores (in vitro)." evidence="4">
    <original>C</original>
    <variation>D</variation>
    <location>
        <position position="21"/>
    </location>
</feature>
<feature type="mutagenesis site" description="No measurable effect." evidence="4">
    <original>C</original>
    <variation>A</variation>
    <variation>S</variation>
    <location>
        <position position="34"/>
    </location>
</feature>
<feature type="mutagenesis site" description="Generates altered FA cluster (in vitro)." evidence="2 4 5">
    <original>C</original>
    <variation>A</variation>
    <variation>D</variation>
    <variation>S</variation>
    <location>
        <position position="51"/>
    </location>
</feature>
<feature type="mutagenesis site" description="Unable to bind PSI cores (in vitro)." evidence="4">
    <original>C</original>
    <variation>D</variation>
    <location>
        <position position="58"/>
    </location>
</feature>
<feature type="strand" evidence="6">
    <location>
        <begin position="18"/>
        <end position="20"/>
    </location>
</feature>
<feature type="strand" evidence="6">
    <location>
        <begin position="26"/>
        <end position="30"/>
    </location>
</feature>
<feature type="strand" evidence="6">
    <location>
        <begin position="32"/>
        <end position="34"/>
    </location>
</feature>
<feature type="strand" evidence="6">
    <location>
        <begin position="37"/>
        <end position="41"/>
    </location>
</feature>
<feature type="strand" evidence="6">
    <location>
        <begin position="60"/>
        <end position="63"/>
    </location>
</feature>
<feature type="turn" evidence="6">
    <location>
        <begin position="69"/>
        <end position="71"/>
    </location>
</feature>
<feature type="strand" evidence="6">
    <location>
        <begin position="74"/>
        <end position="79"/>
    </location>
</feature>
<accession>P31087</accession>
<accession>B1XNQ5</accession>
<name>PSAC_PICP2</name>
<gene>
    <name type="primary">psaC</name>
    <name type="ordered locus">SYNPCC7002_A1589</name>
</gene>
<proteinExistence type="evidence at protein level"/>
<dbReference type="EC" id="1.97.1.12"/>
<dbReference type="EMBL" id="M86238">
    <property type="protein sequence ID" value="AAA27353.1"/>
    <property type="molecule type" value="Genomic_DNA"/>
</dbReference>
<dbReference type="EMBL" id="CP000951">
    <property type="protein sequence ID" value="ACA99580.1"/>
    <property type="molecule type" value="Genomic_DNA"/>
</dbReference>
<dbReference type="RefSeq" id="WP_012307203.1">
    <property type="nucleotide sequence ID" value="NZ_JAHHPU010000002.1"/>
</dbReference>
<dbReference type="PDB" id="1K0T">
    <property type="method" value="NMR"/>
    <property type="chains" value="A=2-81"/>
</dbReference>
<dbReference type="PDBsum" id="1K0T"/>
<dbReference type="SMR" id="P31087"/>
<dbReference type="STRING" id="32049.SYNPCC7002_A1589"/>
<dbReference type="KEGG" id="syp:SYNPCC7002_A1589"/>
<dbReference type="eggNOG" id="COG1143">
    <property type="taxonomic scope" value="Bacteria"/>
</dbReference>
<dbReference type="HOGENOM" id="CLU_139698_8_0_3"/>
<dbReference type="EvolutionaryTrace" id="P31087"/>
<dbReference type="Proteomes" id="UP000001688">
    <property type="component" value="Chromosome"/>
</dbReference>
<dbReference type="GO" id="GO:0009522">
    <property type="term" value="C:photosystem I"/>
    <property type="evidence" value="ECO:0007669"/>
    <property type="project" value="UniProtKB-KW"/>
</dbReference>
<dbReference type="GO" id="GO:0031676">
    <property type="term" value="C:plasma membrane-derived thylakoid membrane"/>
    <property type="evidence" value="ECO:0007669"/>
    <property type="project" value="UniProtKB-SubCell"/>
</dbReference>
<dbReference type="GO" id="GO:0051539">
    <property type="term" value="F:4 iron, 4 sulfur cluster binding"/>
    <property type="evidence" value="ECO:0007669"/>
    <property type="project" value="UniProtKB-KW"/>
</dbReference>
<dbReference type="GO" id="GO:0009055">
    <property type="term" value="F:electron transfer activity"/>
    <property type="evidence" value="ECO:0007669"/>
    <property type="project" value="UniProtKB-UniRule"/>
</dbReference>
<dbReference type="GO" id="GO:0046872">
    <property type="term" value="F:metal ion binding"/>
    <property type="evidence" value="ECO:0007669"/>
    <property type="project" value="UniProtKB-KW"/>
</dbReference>
<dbReference type="GO" id="GO:0060090">
    <property type="term" value="F:molecular adaptor activity"/>
    <property type="evidence" value="ECO:0000269"/>
    <property type="project" value="DisProt"/>
</dbReference>
<dbReference type="GO" id="GO:0016491">
    <property type="term" value="F:oxidoreductase activity"/>
    <property type="evidence" value="ECO:0007669"/>
    <property type="project" value="UniProtKB-KW"/>
</dbReference>
<dbReference type="GO" id="GO:0009773">
    <property type="term" value="P:photosynthetic electron transport in photosystem I"/>
    <property type="evidence" value="ECO:0007669"/>
    <property type="project" value="InterPro"/>
</dbReference>
<dbReference type="DisProt" id="DP00935"/>
<dbReference type="FunFam" id="3.30.70.20:FF:000001">
    <property type="entry name" value="Photosystem I iron-sulfur center"/>
    <property type="match status" value="1"/>
</dbReference>
<dbReference type="Gene3D" id="3.30.70.20">
    <property type="match status" value="1"/>
</dbReference>
<dbReference type="HAMAP" id="MF_01303">
    <property type="entry name" value="PSI_PsaC"/>
    <property type="match status" value="1"/>
</dbReference>
<dbReference type="InterPro" id="IPR017896">
    <property type="entry name" value="4Fe4S_Fe-S-bd"/>
</dbReference>
<dbReference type="InterPro" id="IPR017900">
    <property type="entry name" value="4Fe4S_Fe_S_CS"/>
</dbReference>
<dbReference type="InterPro" id="IPR050157">
    <property type="entry name" value="PSI_iron-sulfur_center"/>
</dbReference>
<dbReference type="InterPro" id="IPR017491">
    <property type="entry name" value="PSI_PsaC"/>
</dbReference>
<dbReference type="NCBIfam" id="TIGR03048">
    <property type="entry name" value="PS_I_psaC"/>
    <property type="match status" value="1"/>
</dbReference>
<dbReference type="PANTHER" id="PTHR24960:SF79">
    <property type="entry name" value="PHOTOSYSTEM I IRON-SULFUR CENTER"/>
    <property type="match status" value="1"/>
</dbReference>
<dbReference type="PANTHER" id="PTHR24960">
    <property type="entry name" value="PHOTOSYSTEM I IRON-SULFUR CENTER-RELATED"/>
    <property type="match status" value="1"/>
</dbReference>
<dbReference type="Pfam" id="PF12838">
    <property type="entry name" value="Fer4_7"/>
    <property type="match status" value="1"/>
</dbReference>
<dbReference type="SUPFAM" id="SSF54862">
    <property type="entry name" value="4Fe-4S ferredoxins"/>
    <property type="match status" value="1"/>
</dbReference>
<dbReference type="PROSITE" id="PS00198">
    <property type="entry name" value="4FE4S_FER_1"/>
    <property type="match status" value="2"/>
</dbReference>
<dbReference type="PROSITE" id="PS51379">
    <property type="entry name" value="4FE4S_FER_2"/>
    <property type="match status" value="2"/>
</dbReference>
<sequence length="81" mass="8814">MSHSVKIYDTCIGCTQCVRACPLDVLEMVPWDGCKAGQIASSPRTEDCVGCKRCETACPTDFLSIRVYLGAETTRSMGLAY</sequence>
<organism>
    <name type="scientific">Picosynechococcus sp. (strain ATCC 27264 / PCC 7002 / PR-6)</name>
    <name type="common">Agmenellum quadruplicatum</name>
    <dbReference type="NCBI Taxonomy" id="32049"/>
    <lineage>
        <taxon>Bacteria</taxon>
        <taxon>Bacillati</taxon>
        <taxon>Cyanobacteriota</taxon>
        <taxon>Cyanophyceae</taxon>
        <taxon>Oscillatoriophycideae</taxon>
        <taxon>Chroococcales</taxon>
        <taxon>Geminocystaceae</taxon>
        <taxon>Picosynechococcus</taxon>
    </lineage>
</organism>
<protein>
    <recommendedName>
        <fullName>Photosystem I iron-sulfur center</fullName>
        <ecNumber>1.97.1.12</ecNumber>
    </recommendedName>
    <alternativeName>
        <fullName>9 kDa polypeptide</fullName>
    </alternativeName>
    <alternativeName>
        <fullName>PSI-C</fullName>
    </alternativeName>
    <alternativeName>
        <fullName>Photosystem I subunit VII</fullName>
    </alternativeName>
    <alternativeName>
        <fullName>PsaC</fullName>
    </alternativeName>
</protein>
<comment type="function">
    <text>Apoprotein for the two 4Fe-4S centers FA and FB of photosystem I (PSI); essential for photochemical activity. FB is the terminal electron acceptor of PSI, donating electrons to ferredoxin. The C-terminus interacts with PsaA/B/D and helps assemble the protein into the PSI complex. Required for binding of PsaD and PsaE to PSI. PSI is a plastocyanin/cytochrome c6-ferredoxin oxidoreductase, converting photonic excitation into a charge separation, which transfers an electron from the donor P700 chlorophyll pair to the spectroscopically characterized acceptors A0, A1, FX, FA and FB in turn.</text>
</comment>
<comment type="function">
    <text>Mutant proteins with a 3Fe-4S center are not observed bound to PSI in vitro, and are probably not able to do so in vivo.</text>
</comment>
<comment type="catalytic activity">
    <reaction>
        <text>reduced [plastocyanin] + hnu + oxidized [2Fe-2S]-[ferredoxin] = oxidized [plastocyanin] + reduced [2Fe-2S]-[ferredoxin]</text>
        <dbReference type="Rhea" id="RHEA:30407"/>
        <dbReference type="Rhea" id="RHEA-COMP:10000"/>
        <dbReference type="Rhea" id="RHEA-COMP:10001"/>
        <dbReference type="Rhea" id="RHEA-COMP:10039"/>
        <dbReference type="Rhea" id="RHEA-COMP:10040"/>
        <dbReference type="ChEBI" id="CHEBI:29036"/>
        <dbReference type="ChEBI" id="CHEBI:30212"/>
        <dbReference type="ChEBI" id="CHEBI:33737"/>
        <dbReference type="ChEBI" id="CHEBI:33738"/>
        <dbReference type="ChEBI" id="CHEBI:49552"/>
        <dbReference type="EC" id="1.97.1.12"/>
    </reaction>
</comment>
<comment type="cofactor">
    <cofactor>
        <name>[4Fe-4S] cluster</name>
        <dbReference type="ChEBI" id="CHEBI:49883"/>
    </cofactor>
    <text>Binds 2 [4Fe-4S] clusters. Cluster 2 is most probably the spectroscopically characterized electron acceptor FA and cluster 1 is most probably FB.</text>
</comment>
<comment type="subunit">
    <text evidence="1">The cyanobacterial PSI reaction center is composed of one copy each of PsaA,B,C,D,E,F,I,J,K,L,M and X, and forms trimeric complexes.</text>
</comment>
<comment type="subcellular location">
    <subcellularLocation>
        <location evidence="1">Cellular thylakoid membrane</location>
        <topology evidence="1">Peripheral membrane protein</topology>
        <orientation evidence="1">Cytoplasmic side</orientation>
    </subcellularLocation>
</comment>
<evidence type="ECO:0000250" key="1"/>
<evidence type="ECO:0000269" key="2">
    <source>
    </source>
</evidence>
<evidence type="ECO:0000269" key="3">
    <source>
    </source>
</evidence>
<evidence type="ECO:0000269" key="4">
    <source>
    </source>
</evidence>
<evidence type="ECO:0000269" key="5">
    <source>
    </source>
</evidence>
<evidence type="ECO:0007829" key="6">
    <source>
        <dbReference type="PDB" id="1K0T"/>
    </source>
</evidence>